<dbReference type="EC" id="2.1.1.17" evidence="1"/>
<dbReference type="EMBL" id="DS995708">
    <property type="protein sequence ID" value="EEQ35165.1"/>
    <property type="molecule type" value="Genomic_DNA"/>
</dbReference>
<dbReference type="RefSeq" id="XP_002842901.1">
    <property type="nucleotide sequence ID" value="XM_002842855.1"/>
</dbReference>
<dbReference type="SMR" id="C5FZ62"/>
<dbReference type="STRING" id="554155.C5FZ62"/>
<dbReference type="GeneID" id="9227864"/>
<dbReference type="VEuPathDB" id="FungiDB:MCYG_07984"/>
<dbReference type="eggNOG" id="ENOG502QRGH">
    <property type="taxonomic scope" value="Eukaryota"/>
</dbReference>
<dbReference type="HOGENOM" id="CLU_005987_0_0_1"/>
<dbReference type="OMA" id="RIWYSVG"/>
<dbReference type="OrthoDB" id="4583at2759"/>
<dbReference type="UniPathway" id="UPA00753"/>
<dbReference type="Proteomes" id="UP000002035">
    <property type="component" value="Unassembled WGS sequence"/>
</dbReference>
<dbReference type="GO" id="GO:0032541">
    <property type="term" value="C:cortical endoplasmic reticulum"/>
    <property type="evidence" value="ECO:0007669"/>
    <property type="project" value="EnsemblFungi"/>
</dbReference>
<dbReference type="GO" id="GO:0005789">
    <property type="term" value="C:endoplasmic reticulum membrane"/>
    <property type="evidence" value="ECO:0007669"/>
    <property type="project" value="UniProtKB-SubCell"/>
</dbReference>
<dbReference type="GO" id="GO:0097038">
    <property type="term" value="C:perinuclear endoplasmic reticulum"/>
    <property type="evidence" value="ECO:0007669"/>
    <property type="project" value="EnsemblFungi"/>
</dbReference>
<dbReference type="GO" id="GO:0004608">
    <property type="term" value="F:phosphatidylethanolamine N-methyltransferase activity"/>
    <property type="evidence" value="ECO:0007669"/>
    <property type="project" value="UniProtKB-UniRule"/>
</dbReference>
<dbReference type="GO" id="GO:0032259">
    <property type="term" value="P:methylation"/>
    <property type="evidence" value="ECO:0007669"/>
    <property type="project" value="UniProtKB-KW"/>
</dbReference>
<dbReference type="GO" id="GO:0006656">
    <property type="term" value="P:phosphatidylcholine biosynthetic process"/>
    <property type="evidence" value="ECO:0007669"/>
    <property type="project" value="UniProtKB-UniRule"/>
</dbReference>
<dbReference type="FunFam" id="2.60.40.2840:FF:000006">
    <property type="entry name" value="Phosphatidylethanolamine N-methyltransferase"/>
    <property type="match status" value="1"/>
</dbReference>
<dbReference type="Gene3D" id="2.60.40.2840">
    <property type="match status" value="1"/>
</dbReference>
<dbReference type="HAMAP" id="MF_03217">
    <property type="entry name" value="PEMT"/>
    <property type="match status" value="1"/>
</dbReference>
<dbReference type="InterPro" id="IPR007318">
    <property type="entry name" value="Phopholipid_MeTrfase"/>
</dbReference>
<dbReference type="InterPro" id="IPR016219">
    <property type="entry name" value="Phosphatid-EA_MeTrfase_fun"/>
</dbReference>
<dbReference type="PANTHER" id="PTHR32138">
    <property type="entry name" value="PHOSPHATIDYLETHANOLAMINE N-METHYLTRANSFERASE"/>
    <property type="match status" value="1"/>
</dbReference>
<dbReference type="PANTHER" id="PTHR32138:SF0">
    <property type="entry name" value="PHOSPHATIDYLETHANOLAMINE N-METHYLTRANSFERASE"/>
    <property type="match status" value="1"/>
</dbReference>
<dbReference type="Pfam" id="PF04191">
    <property type="entry name" value="PEMT"/>
    <property type="match status" value="2"/>
</dbReference>
<dbReference type="PIRSF" id="PIRSF000383">
    <property type="entry name" value="PEAMT"/>
    <property type="match status" value="1"/>
</dbReference>
<dbReference type="PROSITE" id="PS51598">
    <property type="entry name" value="SAM_CHO2"/>
    <property type="match status" value="1"/>
</dbReference>
<reference key="1">
    <citation type="journal article" date="2012" name="MBio">
        <title>Comparative genome analysis of Trichophyton rubrum and related dermatophytes reveals candidate genes involved in infection.</title>
        <authorList>
            <person name="Martinez D.A."/>
            <person name="Oliver B.G."/>
            <person name="Graeser Y."/>
            <person name="Goldberg J.M."/>
            <person name="Li W."/>
            <person name="Martinez-Rossi N.M."/>
            <person name="Monod M."/>
            <person name="Shelest E."/>
            <person name="Barton R.C."/>
            <person name="Birch E."/>
            <person name="Brakhage A.A."/>
            <person name="Chen Z."/>
            <person name="Gurr S.J."/>
            <person name="Heiman D."/>
            <person name="Heitman J."/>
            <person name="Kosti I."/>
            <person name="Rossi A."/>
            <person name="Saif S."/>
            <person name="Samalova M."/>
            <person name="Saunders C.W."/>
            <person name="Shea T."/>
            <person name="Summerbell R.C."/>
            <person name="Xu J."/>
            <person name="Young S."/>
            <person name="Zeng Q."/>
            <person name="Birren B.W."/>
            <person name="Cuomo C.A."/>
            <person name="White T.C."/>
        </authorList>
    </citation>
    <scope>NUCLEOTIDE SEQUENCE [LARGE SCALE GENOMIC DNA]</scope>
    <source>
        <strain>ATCC MYA-4605 / CBS 113480</strain>
    </source>
</reference>
<organism>
    <name type="scientific">Arthroderma otae (strain ATCC MYA-4605 / CBS 113480)</name>
    <name type="common">Microsporum canis</name>
    <dbReference type="NCBI Taxonomy" id="554155"/>
    <lineage>
        <taxon>Eukaryota</taxon>
        <taxon>Fungi</taxon>
        <taxon>Dikarya</taxon>
        <taxon>Ascomycota</taxon>
        <taxon>Pezizomycotina</taxon>
        <taxon>Eurotiomycetes</taxon>
        <taxon>Eurotiomycetidae</taxon>
        <taxon>Onygenales</taxon>
        <taxon>Arthrodermataceae</taxon>
        <taxon>Microsporum</taxon>
    </lineage>
</organism>
<accession>C5FZ62</accession>
<proteinExistence type="inferred from homology"/>
<gene>
    <name type="primary">CHO2</name>
    <name type="ORF">MCYG_07984</name>
</gene>
<evidence type="ECO:0000255" key="1">
    <source>
        <dbReference type="HAMAP-Rule" id="MF_03217"/>
    </source>
</evidence>
<evidence type="ECO:0000256" key="2">
    <source>
        <dbReference type="SAM" id="MobiDB-lite"/>
    </source>
</evidence>
<keyword id="KW-0256">Endoplasmic reticulum</keyword>
<keyword id="KW-0444">Lipid biosynthesis</keyword>
<keyword id="KW-0443">Lipid metabolism</keyword>
<keyword id="KW-0472">Membrane</keyword>
<keyword id="KW-0489">Methyltransferase</keyword>
<keyword id="KW-0594">Phospholipid biosynthesis</keyword>
<keyword id="KW-1208">Phospholipid metabolism</keyword>
<keyword id="KW-1185">Reference proteome</keyword>
<keyword id="KW-0949">S-adenosyl-L-methionine</keyword>
<keyword id="KW-0808">Transferase</keyword>
<keyword id="KW-0812">Transmembrane</keyword>
<keyword id="KW-1133">Transmembrane helix</keyword>
<protein>
    <recommendedName>
        <fullName evidence="1">Phosphatidylethanolamine N-methyltransferase</fullName>
        <shortName evidence="1">PE methyltransferase</shortName>
        <shortName evidence="1">PEAMT</shortName>
        <shortName evidence="1">PEMT</shortName>
        <ecNumber evidence="1">2.1.1.17</ecNumber>
    </recommendedName>
</protein>
<sequence>MAKPSAVDQPDGAGLRERKTKTVEEPVKPSATSGDGGAAQTKKKTIGRTPDGTAFTVPHTRDMVSQLLSPSEPKNLSDILVLSIIGLHIVLLYLLPSYFRIPIFAVLFLSWRAAYNIGIGWLLHMQSNHSTMVLWARQTKIFVNPATGKNPHPKLYSFIKRELETKIPEDYSFEDAPIEYNTWLVFRRVVDLILMCDFTSYCLFAIACGSRPAEENFLVLILRWIVGMGLVLFNLWVKLDAHRVVKDFAWYWGDFFYLVDQELTFDGVFEMAPHPMYSVGYAGYYGISLMAASYKVLFISILAHAAQFAFLVLVENPHIEKTYNAPPPRKRVLESHAAAVTANGEEKFSRRSSDSSDMAPPPSPVALPSSTHNLVGVKNLDLHRITDSSVILIQLLFFALTMLTPATPIYQFFFVLNAAVWRLWYSVGIGYILNCQSHRREWTRHFVKFGETKEEAWNQWKGTYHLSMTLCYASFIAAAWKMYTLPENWGYGLAILKHVLGAGLIALQIWTSVSIYESLGEFGWFFGDFFFDEAPKLTYSGIYRFLNNPERVLGLAGVWGAALITSSRAMIFLALLSHTLGIAFIQLVERPHMQKLYGRGLRQDAGLVRSIKRSLPPSFKQLHGSVDRILDESIEFIEEVLDTARPKLAAGVTTFVKDTSELFHKYPARITITRIEPDVAGYDMNDYSLSVDTADCITIKDGAEDKSEVPVFEYGSPIKISWTAPLNHSKKDWVGLYMIGQNPSREVTKVSSWGRWVATNEGSFDSVLSEKGLLTSDTVVSKPDSANASANNSKKSGKSRKKSSAHEVASGQMVFSGDKLWWTQGVFEFRYHHNGKHNVMATSRPFEIRIPKFDDEHIPSHLPPNGGGFMTTAVEQALLPIVQNCFDRDPEISPQTAEEPFGCETESDLKYAKRVVYAVHQMFGIEFATEVVRADGNVQNLAWRHAQVKRREHTYSRSRAMK</sequence>
<comment type="function">
    <text evidence="1">Catalyzes the first step of the methylation pathway of phosphatidylcholine biosynthesis, the SAM-dependent methylation of phosphatidylethanolamine (PE) to phosphatidylmonomethylethanolamine (PMME).</text>
</comment>
<comment type="catalytic activity">
    <reaction evidence="1">
        <text>a 1,2-diacyl-sn-glycero-3-phosphoethanolamine + S-adenosyl-L-methionine = a 1,2-diacyl-sn-glycero-3-phospho-N-methylethanolamine + S-adenosyl-L-homocysteine + H(+)</text>
        <dbReference type="Rhea" id="RHEA:11164"/>
        <dbReference type="ChEBI" id="CHEBI:15378"/>
        <dbReference type="ChEBI" id="CHEBI:57856"/>
        <dbReference type="ChEBI" id="CHEBI:59789"/>
        <dbReference type="ChEBI" id="CHEBI:64573"/>
        <dbReference type="ChEBI" id="CHEBI:64612"/>
        <dbReference type="EC" id="2.1.1.17"/>
    </reaction>
</comment>
<comment type="pathway">
    <text evidence="1">Phospholipid metabolism; phosphatidylcholine biosynthesis.</text>
</comment>
<comment type="subcellular location">
    <subcellularLocation>
        <location evidence="1">Endoplasmic reticulum membrane</location>
        <topology evidence="1">Multi-pass membrane protein</topology>
    </subcellularLocation>
</comment>
<comment type="similarity">
    <text evidence="1">Belongs to the class VI-like SAM-binding methyltransferase superfamily. CHO2 family.</text>
</comment>
<feature type="chain" id="PRO_0000405897" description="Phosphatidylethanolamine N-methyltransferase">
    <location>
        <begin position="1"/>
        <end position="962"/>
    </location>
</feature>
<feature type="topological domain" description="Lumenal" evidence="1">
    <location>
        <begin position="1"/>
        <end position="78"/>
    </location>
</feature>
<feature type="transmembrane region" description="Helical" evidence="1">
    <location>
        <begin position="79"/>
        <end position="99"/>
    </location>
</feature>
<feature type="topological domain" description="Cytoplasmic" evidence="1">
    <location>
        <begin position="100"/>
        <end position="102"/>
    </location>
</feature>
<feature type="transmembrane region" description="Helical" evidence="1">
    <location>
        <begin position="103"/>
        <end position="123"/>
    </location>
</feature>
<feature type="topological domain" description="Lumenal" evidence="1">
    <location>
        <begin position="124"/>
        <end position="188"/>
    </location>
</feature>
<feature type="transmembrane region" description="Helical" evidence="1">
    <location>
        <begin position="189"/>
        <end position="209"/>
    </location>
</feature>
<feature type="topological domain" description="Cytoplasmic" evidence="1">
    <location>
        <begin position="210"/>
        <end position="216"/>
    </location>
</feature>
<feature type="transmembrane region" description="Helical" evidence="1">
    <location>
        <begin position="217"/>
        <end position="237"/>
    </location>
</feature>
<feature type="topological domain" description="Lumenal" evidence="1">
    <location>
        <begin position="238"/>
        <end position="270"/>
    </location>
</feature>
<feature type="transmembrane region" description="Helical" evidence="1">
    <location>
        <begin position="271"/>
        <end position="291"/>
    </location>
</feature>
<feature type="topological domain" description="Cytoplasmic" evidence="1">
    <location>
        <begin position="292"/>
        <end position="293"/>
    </location>
</feature>
<feature type="transmembrane region" description="Helical" evidence="1">
    <location>
        <begin position="294"/>
        <end position="314"/>
    </location>
</feature>
<feature type="topological domain" description="Lumenal" evidence="1">
    <location>
        <begin position="315"/>
        <end position="389"/>
    </location>
</feature>
<feature type="transmembrane region" description="Helical" evidence="1">
    <location>
        <begin position="390"/>
        <end position="410"/>
    </location>
</feature>
<feature type="topological domain" description="Cytoplasmic" evidence="1">
    <location>
        <position position="411"/>
    </location>
</feature>
<feature type="transmembrane region" description="Helical" evidence="1">
    <location>
        <begin position="412"/>
        <end position="432"/>
    </location>
</feature>
<feature type="topological domain" description="Lumenal" evidence="1">
    <location>
        <begin position="433"/>
        <end position="465"/>
    </location>
</feature>
<feature type="transmembrane region" description="Helical" evidence="1">
    <location>
        <begin position="466"/>
        <end position="486"/>
    </location>
</feature>
<feature type="topological domain" description="Cytoplasmic" evidence="1">
    <location>
        <begin position="487"/>
        <end position="488"/>
    </location>
</feature>
<feature type="transmembrane region" description="Helical" evidence="1">
    <location>
        <begin position="489"/>
        <end position="509"/>
    </location>
</feature>
<feature type="topological domain" description="Lumenal" evidence="1">
    <location>
        <begin position="510"/>
        <end position="568"/>
    </location>
</feature>
<feature type="transmembrane region" description="Helical" evidence="1">
    <location>
        <begin position="569"/>
        <end position="589"/>
    </location>
</feature>
<feature type="topological domain" description="Cytoplasmic" evidence="1">
    <location>
        <begin position="590"/>
        <end position="962"/>
    </location>
</feature>
<feature type="region of interest" description="Disordered" evidence="2">
    <location>
        <begin position="1"/>
        <end position="55"/>
    </location>
</feature>
<feature type="region of interest" description="Disordered" evidence="2">
    <location>
        <begin position="341"/>
        <end position="370"/>
    </location>
</feature>
<feature type="region of interest" description="Disordered" evidence="2">
    <location>
        <begin position="780"/>
        <end position="808"/>
    </location>
</feature>
<feature type="compositionally biased region" description="Basic and acidic residues" evidence="2">
    <location>
        <begin position="14"/>
        <end position="27"/>
    </location>
</feature>
<feature type="compositionally biased region" description="Basic and acidic residues" evidence="2">
    <location>
        <begin position="344"/>
        <end position="354"/>
    </location>
</feature>
<feature type="compositionally biased region" description="Low complexity" evidence="2">
    <location>
        <begin position="781"/>
        <end position="794"/>
    </location>
</feature>
<name>CHO2_ARTOC</name>